<proteinExistence type="inferred from homology"/>
<name>NTPP_MYCMM</name>
<reference key="1">
    <citation type="journal article" date="2008" name="Genome Res.">
        <title>Insights from the complete genome sequence of Mycobacterium marinum on the evolution of Mycobacterium tuberculosis.</title>
        <authorList>
            <person name="Stinear T.P."/>
            <person name="Seemann T."/>
            <person name="Harrison P.F."/>
            <person name="Jenkin G.A."/>
            <person name="Davies J.K."/>
            <person name="Johnson P.D."/>
            <person name="Abdellah Z."/>
            <person name="Arrowsmith C."/>
            <person name="Chillingworth T."/>
            <person name="Churcher C."/>
            <person name="Clarke K."/>
            <person name="Cronin A."/>
            <person name="Davis P."/>
            <person name="Goodhead I."/>
            <person name="Holroyd N."/>
            <person name="Jagels K."/>
            <person name="Lord A."/>
            <person name="Moule S."/>
            <person name="Mungall K."/>
            <person name="Norbertczak H."/>
            <person name="Quail M.A."/>
            <person name="Rabbinowitsch E."/>
            <person name="Walker D."/>
            <person name="White B."/>
            <person name="Whitehead S."/>
            <person name="Small P.L."/>
            <person name="Brosch R."/>
            <person name="Ramakrishnan L."/>
            <person name="Fischbach M.A."/>
            <person name="Parkhill J."/>
            <person name="Cole S.T."/>
        </authorList>
    </citation>
    <scope>NUCLEOTIDE SEQUENCE [LARGE SCALE GENOMIC DNA]</scope>
    <source>
        <strain>ATCC BAA-535 / M</strain>
    </source>
</reference>
<accession>B2HEK5</accession>
<keyword id="KW-0963">Cytoplasm</keyword>
<keyword id="KW-0378">Hydrolase</keyword>
<keyword id="KW-0546">Nucleotide metabolism</keyword>
<keyword id="KW-1185">Reference proteome</keyword>
<dbReference type="EC" id="3.6.1.9" evidence="1"/>
<dbReference type="EMBL" id="CP000854">
    <property type="protein sequence ID" value="ACC39712.1"/>
    <property type="molecule type" value="Genomic_DNA"/>
</dbReference>
<dbReference type="RefSeq" id="WP_012393128.1">
    <property type="nucleotide sequence ID" value="NC_010612.1"/>
</dbReference>
<dbReference type="SMR" id="B2HEK5"/>
<dbReference type="STRING" id="216594.MMAR_1254"/>
<dbReference type="KEGG" id="mmi:MMAR_1254"/>
<dbReference type="eggNOG" id="COG0424">
    <property type="taxonomic scope" value="Bacteria"/>
</dbReference>
<dbReference type="HOGENOM" id="CLU_040416_1_2_11"/>
<dbReference type="OrthoDB" id="3527985at2"/>
<dbReference type="Proteomes" id="UP000001190">
    <property type="component" value="Chromosome"/>
</dbReference>
<dbReference type="GO" id="GO:0005737">
    <property type="term" value="C:cytoplasm"/>
    <property type="evidence" value="ECO:0007669"/>
    <property type="project" value="UniProtKB-SubCell"/>
</dbReference>
<dbReference type="GO" id="GO:0047429">
    <property type="term" value="F:nucleoside triphosphate diphosphatase activity"/>
    <property type="evidence" value="ECO:0007669"/>
    <property type="project" value="UniProtKB-EC"/>
</dbReference>
<dbReference type="GO" id="GO:0009117">
    <property type="term" value="P:nucleotide metabolic process"/>
    <property type="evidence" value="ECO:0007669"/>
    <property type="project" value="UniProtKB-KW"/>
</dbReference>
<dbReference type="CDD" id="cd00555">
    <property type="entry name" value="Maf"/>
    <property type="match status" value="1"/>
</dbReference>
<dbReference type="Gene3D" id="3.90.950.10">
    <property type="match status" value="1"/>
</dbReference>
<dbReference type="HAMAP" id="MF_00528">
    <property type="entry name" value="Maf"/>
    <property type="match status" value="1"/>
</dbReference>
<dbReference type="InterPro" id="IPR029001">
    <property type="entry name" value="ITPase-like_fam"/>
</dbReference>
<dbReference type="InterPro" id="IPR003697">
    <property type="entry name" value="Maf-like"/>
</dbReference>
<dbReference type="NCBIfam" id="TIGR00172">
    <property type="entry name" value="maf"/>
    <property type="match status" value="1"/>
</dbReference>
<dbReference type="PANTHER" id="PTHR43213">
    <property type="entry name" value="BIFUNCTIONAL DTTP/UTP PYROPHOSPHATASE/METHYLTRANSFERASE PROTEIN-RELATED"/>
    <property type="match status" value="1"/>
</dbReference>
<dbReference type="PANTHER" id="PTHR43213:SF5">
    <property type="entry name" value="BIFUNCTIONAL DTTP_UTP PYROPHOSPHATASE_METHYLTRANSFERASE PROTEIN-RELATED"/>
    <property type="match status" value="1"/>
</dbReference>
<dbReference type="Pfam" id="PF02545">
    <property type="entry name" value="Maf"/>
    <property type="match status" value="1"/>
</dbReference>
<dbReference type="PIRSF" id="PIRSF006305">
    <property type="entry name" value="Maf"/>
    <property type="match status" value="1"/>
</dbReference>
<dbReference type="SUPFAM" id="SSF52972">
    <property type="entry name" value="ITPase-like"/>
    <property type="match status" value="1"/>
</dbReference>
<protein>
    <recommendedName>
        <fullName evidence="1">Nucleoside triphosphate pyrophosphatase</fullName>
        <ecNumber evidence="1">3.6.1.9</ecNumber>
    </recommendedName>
    <alternativeName>
        <fullName evidence="1">Nucleotide pyrophosphatase</fullName>
        <shortName evidence="1">Nucleotide PPase</shortName>
    </alternativeName>
</protein>
<feature type="chain" id="PRO_1000127793" description="Nucleoside triphosphate pyrophosphatase">
    <location>
        <begin position="1"/>
        <end position="216"/>
    </location>
</feature>
<feature type="active site" description="Proton acceptor" evidence="1">
    <location>
        <position position="82"/>
    </location>
</feature>
<evidence type="ECO:0000255" key="1">
    <source>
        <dbReference type="HAMAP-Rule" id="MF_00528"/>
    </source>
</evidence>
<gene>
    <name type="ordered locus">MMAR_1254</name>
</gene>
<organism>
    <name type="scientific">Mycobacterium marinum (strain ATCC BAA-535 / M)</name>
    <dbReference type="NCBI Taxonomy" id="216594"/>
    <lineage>
        <taxon>Bacteria</taxon>
        <taxon>Bacillati</taxon>
        <taxon>Actinomycetota</taxon>
        <taxon>Actinomycetes</taxon>
        <taxon>Mycobacteriales</taxon>
        <taxon>Mycobacteriaceae</taxon>
        <taxon>Mycobacterium</taxon>
        <taxon>Mycobacterium ulcerans group</taxon>
    </lineage>
</organism>
<comment type="function">
    <text evidence="1">Nucleoside triphosphate pyrophosphatase. May have a dual role in cell division arrest and in preventing the incorporation of modified nucleotides into cellular nucleic acids.</text>
</comment>
<comment type="catalytic activity">
    <reaction evidence="1">
        <text>a ribonucleoside 5'-triphosphate + H2O = a ribonucleoside 5'-phosphate + diphosphate + H(+)</text>
        <dbReference type="Rhea" id="RHEA:23996"/>
        <dbReference type="ChEBI" id="CHEBI:15377"/>
        <dbReference type="ChEBI" id="CHEBI:15378"/>
        <dbReference type="ChEBI" id="CHEBI:33019"/>
        <dbReference type="ChEBI" id="CHEBI:58043"/>
        <dbReference type="ChEBI" id="CHEBI:61557"/>
        <dbReference type="EC" id="3.6.1.9"/>
    </reaction>
</comment>
<comment type="catalytic activity">
    <reaction evidence="1">
        <text>a 2'-deoxyribonucleoside 5'-triphosphate + H2O = a 2'-deoxyribonucleoside 5'-phosphate + diphosphate + H(+)</text>
        <dbReference type="Rhea" id="RHEA:44644"/>
        <dbReference type="ChEBI" id="CHEBI:15377"/>
        <dbReference type="ChEBI" id="CHEBI:15378"/>
        <dbReference type="ChEBI" id="CHEBI:33019"/>
        <dbReference type="ChEBI" id="CHEBI:61560"/>
        <dbReference type="ChEBI" id="CHEBI:65317"/>
        <dbReference type="EC" id="3.6.1.9"/>
    </reaction>
</comment>
<comment type="cofactor">
    <cofactor evidence="1">
        <name>a divalent metal cation</name>
        <dbReference type="ChEBI" id="CHEBI:60240"/>
    </cofactor>
</comment>
<comment type="subcellular location">
    <subcellularLocation>
        <location evidence="1">Cytoplasm</location>
    </subcellularLocation>
</comment>
<comment type="similarity">
    <text evidence="1">Belongs to the Maf family.</text>
</comment>
<sequence>MTRLVLGSASSGRLKVLQQAGVDPLVVVSGVDEDAIMAGLGPAATPADVVRVLARAKAEQVATTLTGQQASVATDCLVIGCDSMLYIDGRLCGKPETVDDARQLWRSMAGRCGHLYTGHSVVRLTEQRVTHRDDETSTTTVHFATPSDDDLEAYLATGESLKVAGGFTLDGLGGWFITGVEGDPSAVVGIGLPLTRDLISRAGISIAALWASNPLP</sequence>